<name>PIN_BPT4</name>
<evidence type="ECO:0000269" key="1">
    <source>
    </source>
</evidence>
<protein>
    <recommendedName>
        <fullName>Host protease inhibitor</fullName>
        <shortName>Protein pin</shortName>
    </recommendedName>
</protein>
<proteinExistence type="predicted"/>
<feature type="chain" id="PRO_0000164966" description="Host protease inhibitor">
    <location>
        <begin position="1"/>
        <end position="161"/>
    </location>
</feature>
<reference key="1">
    <citation type="journal article" date="1987" name="Nucleic Acids Res.">
        <title>Nucleotide sequence and primary structures of gene products coded for by the T4 genome between map positions 48.266 kb and 39.166 kb.</title>
        <authorList>
            <person name="Tomaschewski J."/>
            <person name="Rueger W."/>
        </authorList>
    </citation>
    <scope>NUCLEOTIDE SEQUENCE [GENOMIC DNA]</scope>
    <source>
        <strain>C</strain>
    </source>
</reference>
<reference key="2">
    <citation type="journal article" date="2003" name="Microbiol. Mol. Biol. Rev.">
        <title>Bacteriophage T4 genome.</title>
        <authorList>
            <person name="Miller E.S."/>
            <person name="Kutter E."/>
            <person name="Mosig G."/>
            <person name="Arisaka F."/>
            <person name="Kunisawa T."/>
            <person name="Ruger W."/>
        </authorList>
    </citation>
    <scope>NUCLEOTIDE SEQUENCE [LARGE SCALE GENOMIC DNA]</scope>
</reference>
<reference key="3">
    <citation type="journal article" date="1988" name="J. Bacteriol.">
        <title>A bacteriophage T4 gene which functions to inhibit Escherichia coli Lon protease.</title>
        <authorList>
            <person name="Skorupski K."/>
            <person name="Tomaschewski J."/>
            <person name="Rueger W."/>
            <person name="Simon L.D."/>
        </authorList>
    </citation>
    <scope>FUNCTION</scope>
</reference>
<dbReference type="EMBL" id="Y00122">
    <property type="protein sequence ID" value="CAA68306.1"/>
    <property type="molecule type" value="Genomic_DNA"/>
</dbReference>
<dbReference type="EMBL" id="AF158101">
    <property type="protein sequence ID" value="AAD42641.1"/>
    <property type="molecule type" value="Genomic_DNA"/>
</dbReference>
<dbReference type="PIR" id="I30292">
    <property type="entry name" value="Z3BPT9"/>
</dbReference>
<dbReference type="RefSeq" id="NP_049694.1">
    <property type="nucleotide sequence ID" value="NC_000866.4"/>
</dbReference>
<dbReference type="SMR" id="P07068"/>
<dbReference type="MEROPS" id="I24.001"/>
<dbReference type="GeneID" id="1258773"/>
<dbReference type="KEGG" id="vg:1258773"/>
<dbReference type="OrthoDB" id="10622at10239"/>
<dbReference type="Proteomes" id="UP000009087">
    <property type="component" value="Segment"/>
</dbReference>
<dbReference type="GO" id="GO:0030414">
    <property type="term" value="F:peptidase inhibitor activity"/>
    <property type="evidence" value="ECO:0000314"/>
    <property type="project" value="CACAO"/>
</dbReference>
<dbReference type="InterPro" id="IPR019506">
    <property type="entry name" value="Pept-inhibitor_PinA"/>
</dbReference>
<dbReference type="Pfam" id="PF10465">
    <property type="entry name" value="Inhibitor_I24"/>
    <property type="match status" value="1"/>
</dbReference>
<sequence>MITVDKWFRINRADTGLCNYWPELSAGTVFKVRELVKECEDDIEPDTGIIEIELSDGKIINIYDKPITYWCLWNTESVENGEIEEVVERTNQVVQKPKADFQGERISYALAKLAAQENNDGYEGNLMQAAAEYIEWLETQISFSDRMIQQYKRLHQMFYNT</sequence>
<organism>
    <name type="scientific">Enterobacteria phage T4</name>
    <name type="common">Bacteriophage T4</name>
    <dbReference type="NCBI Taxonomy" id="10665"/>
    <lineage>
        <taxon>Viruses</taxon>
        <taxon>Duplodnaviria</taxon>
        <taxon>Heunggongvirae</taxon>
        <taxon>Uroviricota</taxon>
        <taxon>Caudoviricetes</taxon>
        <taxon>Straboviridae</taxon>
        <taxon>Tevenvirinae</taxon>
        <taxon>Tequatrovirus</taxon>
    </lineage>
</organism>
<accession>P07068</accession>
<gene>
    <name type="primary">pin</name>
    <name type="synonym">pinA</name>
</gene>
<comment type="function">
    <text evidence="1">Plays a role in the inhibition of bacterial toxin-antitoxin system by blocking the action of host Lon protease.</text>
</comment>
<keyword id="KW-0646">Protease inhibitor</keyword>
<keyword id="KW-1185">Reference proteome</keyword>
<organismHost>
    <name type="scientific">Escherichia coli</name>
    <dbReference type="NCBI Taxonomy" id="562"/>
</organismHost>